<feature type="chain" id="PRO_0000459324" description="CD-NTase-associated protein 6">
    <location>
        <begin position="1"/>
        <end position="298"/>
    </location>
</feature>
<feature type="binding site" evidence="1">
    <location>
        <begin position="80"/>
        <end position="85"/>
    </location>
    <ligand>
        <name>ATP</name>
        <dbReference type="ChEBI" id="CHEBI:30616"/>
    </ligand>
</feature>
<feature type="binding site" evidence="1">
    <location>
        <begin position="204"/>
        <end position="205"/>
    </location>
    <ligand>
        <name>ATP</name>
        <dbReference type="ChEBI" id="CHEBI:30616"/>
    </ligand>
</feature>
<organism>
    <name type="scientific">Escherichia coli (strain KTE188)</name>
    <dbReference type="NCBI Taxonomy" id="1181734"/>
    <lineage>
        <taxon>Bacteria</taxon>
        <taxon>Pseudomonadati</taxon>
        <taxon>Pseudomonadota</taxon>
        <taxon>Gammaproteobacteria</taxon>
        <taxon>Enterobacterales</taxon>
        <taxon>Enterobacteriaceae</taxon>
        <taxon>Escherichia</taxon>
    </lineage>
</organism>
<gene>
    <name evidence="3" type="primary">cap6</name>
    <name evidence="5" type="ORF">A13M_04330</name>
</gene>
<proteinExistence type="evidence at protein level"/>
<name>CAP6_ECOKT</name>
<keyword id="KW-0051">Antiviral defense</keyword>
<keyword id="KW-0067">ATP-binding</keyword>
<keyword id="KW-0547">Nucleotide-binding</keyword>
<accession>P0DX67</accession>
<reference key="1">
    <citation type="submission" date="2012-12" db="EMBL/GenBank/DDBJ databases">
        <title>The Genome Sequence of Escherichia coli KTE188.</title>
        <authorList>
            <person name="Feldgarden M."/>
            <person name="Nielsen K.L."/>
            <person name="Frimodt-Moller N."/>
            <person name="Andersen P.S."/>
            <person name="Walker B."/>
            <person name="Young S.K."/>
            <person name="Zeng Q."/>
            <person name="Gargeya S."/>
            <person name="Fitzgerald M."/>
            <person name="Haas B."/>
            <person name="Abouelleil A."/>
            <person name="Alvarado L."/>
            <person name="Arachchi H.M."/>
            <person name="Berlin A.M."/>
            <person name="Chapman S.B."/>
            <person name="Dewar J."/>
            <person name="Goldberg J."/>
            <person name="Griggs A."/>
            <person name="Gujja S."/>
            <person name="Hansen M."/>
            <person name="Howarth C."/>
            <person name="Imamovic A."/>
            <person name="Larimer J."/>
            <person name="McCowan C."/>
            <person name="Murphy C."/>
            <person name="Neiman D."/>
            <person name="Pearson M."/>
            <person name="Priest M."/>
            <person name="Roberts A."/>
            <person name="Saif S."/>
            <person name="Shea T."/>
            <person name="Sisk P."/>
            <person name="Sykes S."/>
            <person name="Wortman J."/>
            <person name="Nusbaum C."/>
            <person name="Birren B."/>
        </authorList>
    </citation>
    <scope>NUCLEOTIDE SEQUENCE [LARGE SCALE GENOMIC DNA]</scope>
    <source>
        <strain>KTE188</strain>
    </source>
</reference>
<reference key="2">
    <citation type="journal article" date="2023" name="Cell">
        <title>A conserved family of immune effectors cleaves cellular ATP upon viral infection.</title>
        <authorList>
            <person name="Rousset F."/>
            <person name="Yirmiya E."/>
            <person name="Nesher S."/>
            <person name="Brandis A."/>
            <person name="Mehlman T."/>
            <person name="Itkin M."/>
            <person name="Malitsky S."/>
            <person name="Millman A."/>
            <person name="Melamed S."/>
            <person name="Sorek R."/>
        </authorList>
    </citation>
    <scope>FUNCTION IN VIRAL DEFENSE</scope>
    <source>
        <strain>KTE188</strain>
    </source>
</reference>
<dbReference type="EMBL" id="ANTE01000038">
    <property type="protein sequence ID" value="ELC78139.1"/>
    <property type="molecule type" value="Genomic_DNA"/>
</dbReference>
<dbReference type="RefSeq" id="WP_001534689.1">
    <property type="nucleotide sequence ID" value="NZ_KB732426.1"/>
</dbReference>
<dbReference type="SMR" id="P0DX67"/>
<dbReference type="GO" id="GO:0005524">
    <property type="term" value="F:ATP binding"/>
    <property type="evidence" value="ECO:0007669"/>
    <property type="project" value="UniProtKB-KW"/>
</dbReference>
<dbReference type="GO" id="GO:0016887">
    <property type="term" value="F:ATP hydrolysis activity"/>
    <property type="evidence" value="ECO:0007669"/>
    <property type="project" value="InterPro"/>
</dbReference>
<dbReference type="GO" id="GO:0051607">
    <property type="term" value="P:defense response to virus"/>
    <property type="evidence" value="ECO:0007669"/>
    <property type="project" value="UniProtKB-KW"/>
</dbReference>
<dbReference type="CDD" id="cd19481">
    <property type="entry name" value="RecA-like_protease"/>
    <property type="match status" value="1"/>
</dbReference>
<dbReference type="Gene3D" id="3.40.50.300">
    <property type="entry name" value="P-loop containing nucleotide triphosphate hydrolases"/>
    <property type="match status" value="1"/>
</dbReference>
<dbReference type="InterPro" id="IPR050221">
    <property type="entry name" value="26S_Proteasome_ATPase"/>
</dbReference>
<dbReference type="InterPro" id="IPR003593">
    <property type="entry name" value="AAA+_ATPase"/>
</dbReference>
<dbReference type="InterPro" id="IPR003959">
    <property type="entry name" value="ATPase_AAA_core"/>
</dbReference>
<dbReference type="InterPro" id="IPR003960">
    <property type="entry name" value="ATPase_AAA_CS"/>
</dbReference>
<dbReference type="InterPro" id="IPR027417">
    <property type="entry name" value="P-loop_NTPase"/>
</dbReference>
<dbReference type="PANTHER" id="PTHR23073">
    <property type="entry name" value="26S PROTEASOME REGULATORY SUBUNIT"/>
    <property type="match status" value="1"/>
</dbReference>
<dbReference type="Pfam" id="PF00004">
    <property type="entry name" value="AAA"/>
    <property type="match status" value="1"/>
</dbReference>
<dbReference type="SMART" id="SM00382">
    <property type="entry name" value="AAA"/>
    <property type="match status" value="1"/>
</dbReference>
<dbReference type="SUPFAM" id="SSF52540">
    <property type="entry name" value="P-loop containing nucleoside triphosphate hydrolases"/>
    <property type="match status" value="1"/>
</dbReference>
<dbReference type="PROSITE" id="PS00674">
    <property type="entry name" value="AAA"/>
    <property type="match status" value="1"/>
</dbReference>
<evidence type="ECO:0000250" key="1">
    <source>
        <dbReference type="UniProtKB" id="D7Y2H4"/>
    </source>
</evidence>
<evidence type="ECO:0000269" key="2">
    <source>
    </source>
</evidence>
<evidence type="ECO:0000303" key="3">
    <source>
    </source>
</evidence>
<evidence type="ECO:0000305" key="4"/>
<evidence type="ECO:0000312" key="5">
    <source>
        <dbReference type="EMBL" id="ELC78139.1"/>
    </source>
</evidence>
<protein>
    <recommendedName>
        <fullName evidence="3">CD-NTase-associated protein 6</fullName>
        <shortName evidence="3">Cap6</shortName>
    </recommendedName>
</protein>
<comment type="function">
    <text evidence="1 2 3">Regulates complex assembly in a CBASS antivirus system (By similarity). CBASS (cyclic oligonucleotide-based antiphage signaling system) provides immunity against bacteriophage (PubMed:37595565). The CD-NTase protein synthesizes cyclic nucleotides in response to infection; these serve as specific second messenger signals (PubMed:37595565). The signals activate a diverse range of effectors, leading to bacterial cell death and thus abortive phage infection (PubMed:37595565). A type III CBASS system (PubMed:37595565). Expression of this CBASS system (Cap18-Cap6-Cap7-CdnC-CapW-Cap17) in a susceptible E.coli (strain MG1655) confers resistance to bacteriophage P1 (PubMed:37595565). Binds and disassembles an active CdnC:Cap7 complex, inhibiting the complex's ability to synthesize cyclic nucleotide second messengers. An AAA+-ATPase remodeler, in the absence of foreign threat Cap6 probably maintains the Cap7 protein in its open, inactive state. Once activated (presumably by a bacteriophage protein) Cap7 binds to and activates its cognate CD-NTase (CdnC in this bacteria) to synthesize a cyclic nucleotide second messenger which leads to abortive phage infection (By similarity).</text>
</comment>
<comment type="subunit">
    <text evidence="1">Homohexamer, forms a 1:1:6 CdnC:Cap7:Cap6 complex.</text>
</comment>
<comment type="similarity">
    <text evidence="4">Belongs to the AAA ATPase family.</text>
</comment>
<sequence length="298" mass="33381">MSKSSVFDSVIDLPQRELTERENILLGFESRYESVHNQLNLLLNQGQLLDWSKKYHKSVLPLCKLVAEQYPLVIFHGDVGTGKTATAECIANRIVRESRTEDSALFKLSNRVRGSGKVGEMGTLLTQAWAEVCEAAGKNRRAILIIDEGDSIAASRSQNHSHHEDKVAVNTLIQGVDELRKFGGRVVVILCTNRLSVLDPALRRRAAIVEEFTRPGLTERESLFRMDLGGMGLSDSQYRQLALATGEKEHLPAWTYSDIRTRLYPAAMSRAFPERALSFNDLMELLKIMRPSPVMGDI</sequence>